<name>PSD_PSEF5</name>
<evidence type="ECO:0000255" key="1">
    <source>
        <dbReference type="HAMAP-Rule" id="MF_00662"/>
    </source>
</evidence>
<feature type="chain" id="PRO_0000262137" description="Phosphatidylserine decarboxylase beta chain" evidence="1">
    <location>
        <begin position="1"/>
        <end position="251"/>
    </location>
</feature>
<feature type="chain" id="PRO_0000262138" description="Phosphatidylserine decarboxylase alpha chain" evidence="1">
    <location>
        <begin position="252"/>
        <end position="288"/>
    </location>
</feature>
<feature type="active site" description="Charge relay system; for autoendoproteolytic cleavage activity" evidence="1">
    <location>
        <position position="90"/>
    </location>
</feature>
<feature type="active site" description="Charge relay system; for autoendoproteolytic cleavage activity" evidence="1">
    <location>
        <position position="147"/>
    </location>
</feature>
<feature type="active site" description="Charge relay system; for autoendoproteolytic cleavage activity" evidence="1">
    <location>
        <position position="252"/>
    </location>
</feature>
<feature type="active site" description="Schiff-base intermediate with substrate; via pyruvic acid; for decarboxylase activity" evidence="1">
    <location>
        <position position="252"/>
    </location>
</feature>
<feature type="site" description="Cleavage (non-hydrolytic); by autocatalysis" evidence="1">
    <location>
        <begin position="251"/>
        <end position="252"/>
    </location>
</feature>
<feature type="modified residue" description="Pyruvic acid (Ser); by autocatalysis" evidence="1">
    <location>
        <position position="252"/>
    </location>
</feature>
<proteinExistence type="inferred from homology"/>
<comment type="function">
    <text evidence="1">Catalyzes the formation of phosphatidylethanolamine (PtdEtn) from phosphatidylserine (PtdSer).</text>
</comment>
<comment type="catalytic activity">
    <reaction evidence="1">
        <text>a 1,2-diacyl-sn-glycero-3-phospho-L-serine + H(+) = a 1,2-diacyl-sn-glycero-3-phosphoethanolamine + CO2</text>
        <dbReference type="Rhea" id="RHEA:20828"/>
        <dbReference type="ChEBI" id="CHEBI:15378"/>
        <dbReference type="ChEBI" id="CHEBI:16526"/>
        <dbReference type="ChEBI" id="CHEBI:57262"/>
        <dbReference type="ChEBI" id="CHEBI:64612"/>
        <dbReference type="EC" id="4.1.1.65"/>
    </reaction>
</comment>
<comment type="cofactor">
    <cofactor evidence="1">
        <name>pyruvate</name>
        <dbReference type="ChEBI" id="CHEBI:15361"/>
    </cofactor>
    <text evidence="1">Binds 1 pyruvoyl group covalently per subunit.</text>
</comment>
<comment type="pathway">
    <text evidence="1">Phospholipid metabolism; phosphatidylethanolamine biosynthesis; phosphatidylethanolamine from CDP-diacylglycerol: step 2/2.</text>
</comment>
<comment type="subunit">
    <text evidence="1">Heterodimer of a large membrane-associated beta subunit and a small pyruvoyl-containing alpha subunit.</text>
</comment>
<comment type="subcellular location">
    <subcellularLocation>
        <location evidence="1">Cell membrane</location>
        <topology evidence="1">Peripheral membrane protein</topology>
    </subcellularLocation>
</comment>
<comment type="PTM">
    <text evidence="1">Is synthesized initially as an inactive proenzyme. Formation of the active enzyme involves a self-maturation process in which the active site pyruvoyl group is generated from an internal serine residue via an autocatalytic post-translational modification. Two non-identical subunits are generated from the proenzyme in this reaction, and the pyruvate is formed at the N-terminus of the alpha chain, which is derived from the carboxyl end of the proenzyme. The autoendoproteolytic cleavage occurs by a canonical serine protease mechanism, in which the side chain hydroxyl group of the serine supplies its oxygen atom to form the C-terminus of the beta chain, while the remainder of the serine residue undergoes an oxidative deamination to produce ammonia and the pyruvoyl prosthetic group on the alpha chain. During this reaction, the Ser that is part of the protease active site of the proenzyme becomes the pyruvoyl prosthetic group, which constitutes an essential element of the active site of the mature decarboxylase.</text>
</comment>
<comment type="similarity">
    <text evidence="1">Belongs to the phosphatidylserine decarboxylase family. PSD-B subfamily. Prokaryotic type I sub-subfamily.</text>
</comment>
<organism>
    <name type="scientific">Pseudomonas fluorescens (strain ATCC BAA-477 / NRRL B-23932 / Pf-5)</name>
    <dbReference type="NCBI Taxonomy" id="220664"/>
    <lineage>
        <taxon>Bacteria</taxon>
        <taxon>Pseudomonadati</taxon>
        <taxon>Pseudomonadota</taxon>
        <taxon>Gammaproteobacteria</taxon>
        <taxon>Pseudomonadales</taxon>
        <taxon>Pseudomonadaceae</taxon>
        <taxon>Pseudomonas</taxon>
    </lineage>
</organism>
<gene>
    <name evidence="1" type="primary">psd</name>
    <name type="ordered locus">PFL_0552</name>
</gene>
<sequence length="288" mass="31749">MKKRLFIISQYLLPHHLLSRLAGCIAECRVRWFKNAFTRWFAKQYQVDMSEAQVEDVTAYEHFNAFFTRALKDGARPLDPTPGAVLSPADGAVSQLGPIEHGRVFQAKGHSYSVLELLGGDPALAQPFMGGDFATIYLSPKDYHRVHMPLAGTLREMVYVPGRIFSVNQTTAENVPELFARNERVVCIFDTERGPMALVLVGAMIVASIETVWAGLVTPPKRELKTVRYDEAARAPIHLEKGAEMGRFKLGSTAIVLFGPDQVQWAQELAAGSPVRMGQGLGLGLPKA</sequence>
<accession>Q4KJ87</accession>
<keyword id="KW-1003">Cell membrane</keyword>
<keyword id="KW-0210">Decarboxylase</keyword>
<keyword id="KW-0444">Lipid biosynthesis</keyword>
<keyword id="KW-0443">Lipid metabolism</keyword>
<keyword id="KW-0456">Lyase</keyword>
<keyword id="KW-0472">Membrane</keyword>
<keyword id="KW-0594">Phospholipid biosynthesis</keyword>
<keyword id="KW-1208">Phospholipid metabolism</keyword>
<keyword id="KW-0670">Pyruvate</keyword>
<keyword id="KW-0865">Zymogen</keyword>
<reference key="1">
    <citation type="journal article" date="2005" name="Nat. Biotechnol.">
        <title>Complete genome sequence of the plant commensal Pseudomonas fluorescens Pf-5.</title>
        <authorList>
            <person name="Paulsen I.T."/>
            <person name="Press C.M."/>
            <person name="Ravel J."/>
            <person name="Kobayashi D.Y."/>
            <person name="Myers G.S.A."/>
            <person name="Mavrodi D.V."/>
            <person name="DeBoy R.T."/>
            <person name="Seshadri R."/>
            <person name="Ren Q."/>
            <person name="Madupu R."/>
            <person name="Dodson R.J."/>
            <person name="Durkin A.S."/>
            <person name="Brinkac L.M."/>
            <person name="Daugherty S.C."/>
            <person name="Sullivan S.A."/>
            <person name="Rosovitz M.J."/>
            <person name="Gwinn M.L."/>
            <person name="Zhou L."/>
            <person name="Schneider D.J."/>
            <person name="Cartinhour S.W."/>
            <person name="Nelson W.C."/>
            <person name="Weidman J."/>
            <person name="Watkins K."/>
            <person name="Tran K."/>
            <person name="Khouri H."/>
            <person name="Pierson E.A."/>
            <person name="Pierson L.S. III"/>
            <person name="Thomashow L.S."/>
            <person name="Loper J.E."/>
        </authorList>
    </citation>
    <scope>NUCLEOTIDE SEQUENCE [LARGE SCALE GENOMIC DNA]</scope>
    <source>
        <strain>ATCC BAA-477 / NRRL B-23932 / Pf-5</strain>
    </source>
</reference>
<dbReference type="EC" id="4.1.1.65" evidence="1"/>
<dbReference type="EMBL" id="CP000076">
    <property type="protein sequence ID" value="AAY95961.1"/>
    <property type="molecule type" value="Genomic_DNA"/>
</dbReference>
<dbReference type="RefSeq" id="WP_011058925.1">
    <property type="nucleotide sequence ID" value="NC_004129.6"/>
</dbReference>
<dbReference type="SMR" id="Q4KJ87"/>
<dbReference type="STRING" id="220664.PFL_0552"/>
<dbReference type="KEGG" id="pfl:PFL_0552"/>
<dbReference type="PATRIC" id="fig|220664.5.peg.569"/>
<dbReference type="eggNOG" id="COG0688">
    <property type="taxonomic scope" value="Bacteria"/>
</dbReference>
<dbReference type="HOGENOM" id="CLU_029061_4_1_6"/>
<dbReference type="UniPathway" id="UPA00558">
    <property type="reaction ID" value="UER00616"/>
</dbReference>
<dbReference type="Proteomes" id="UP000008540">
    <property type="component" value="Chromosome"/>
</dbReference>
<dbReference type="GO" id="GO:0005886">
    <property type="term" value="C:plasma membrane"/>
    <property type="evidence" value="ECO:0007669"/>
    <property type="project" value="UniProtKB-SubCell"/>
</dbReference>
<dbReference type="GO" id="GO:0004609">
    <property type="term" value="F:phosphatidylserine decarboxylase activity"/>
    <property type="evidence" value="ECO:0007669"/>
    <property type="project" value="UniProtKB-UniRule"/>
</dbReference>
<dbReference type="GO" id="GO:0006646">
    <property type="term" value="P:phosphatidylethanolamine biosynthetic process"/>
    <property type="evidence" value="ECO:0007669"/>
    <property type="project" value="UniProtKB-UniRule"/>
</dbReference>
<dbReference type="HAMAP" id="MF_00662">
    <property type="entry name" value="PS_decarb_PSD_B_type1"/>
    <property type="match status" value="1"/>
</dbReference>
<dbReference type="InterPro" id="IPR003817">
    <property type="entry name" value="PS_Dcarbxylase"/>
</dbReference>
<dbReference type="InterPro" id="IPR033177">
    <property type="entry name" value="PSD-B"/>
</dbReference>
<dbReference type="InterPro" id="IPR033178">
    <property type="entry name" value="PSD_type1_pro"/>
</dbReference>
<dbReference type="NCBIfam" id="TIGR00163">
    <property type="entry name" value="PS_decarb"/>
    <property type="match status" value="1"/>
</dbReference>
<dbReference type="PANTHER" id="PTHR10067">
    <property type="entry name" value="PHOSPHATIDYLSERINE DECARBOXYLASE"/>
    <property type="match status" value="1"/>
</dbReference>
<dbReference type="PANTHER" id="PTHR10067:SF6">
    <property type="entry name" value="PHOSPHATIDYLSERINE DECARBOXYLASE PROENZYME, MITOCHONDRIAL"/>
    <property type="match status" value="1"/>
</dbReference>
<dbReference type="Pfam" id="PF02666">
    <property type="entry name" value="PS_Dcarbxylase"/>
    <property type="match status" value="1"/>
</dbReference>
<protein>
    <recommendedName>
        <fullName evidence="1">Phosphatidylserine decarboxylase proenzyme</fullName>
        <ecNumber evidence="1">4.1.1.65</ecNumber>
    </recommendedName>
    <component>
        <recommendedName>
            <fullName evidence="1">Phosphatidylserine decarboxylase alpha chain</fullName>
        </recommendedName>
    </component>
    <component>
        <recommendedName>
            <fullName evidence="1">Phosphatidylserine decarboxylase beta chain</fullName>
        </recommendedName>
    </component>
</protein>